<dbReference type="EMBL" id="BA000023">
    <property type="protein sequence ID" value="BAB65247.1"/>
    <property type="molecule type" value="Genomic_DNA"/>
</dbReference>
<dbReference type="RefSeq" id="WP_010978230.1">
    <property type="nucleotide sequence ID" value="NC_003106.2"/>
</dbReference>
<dbReference type="SMR" id="Q976A1"/>
<dbReference type="STRING" id="273063.STK_02790"/>
<dbReference type="GeneID" id="1458181"/>
<dbReference type="KEGG" id="sto:STK_02790"/>
<dbReference type="PATRIC" id="fig|273063.9.peg.331"/>
<dbReference type="eggNOG" id="arCOG01560">
    <property type="taxonomic scope" value="Archaea"/>
</dbReference>
<dbReference type="OrthoDB" id="30957at2157"/>
<dbReference type="Proteomes" id="UP000001015">
    <property type="component" value="Chromosome"/>
</dbReference>
<dbReference type="GO" id="GO:0005737">
    <property type="term" value="C:cytoplasm"/>
    <property type="evidence" value="ECO:0007669"/>
    <property type="project" value="TreeGrafter"/>
</dbReference>
<dbReference type="GO" id="GO:0005525">
    <property type="term" value="F:GTP binding"/>
    <property type="evidence" value="ECO:0007669"/>
    <property type="project" value="UniProtKB-KW"/>
</dbReference>
<dbReference type="GO" id="GO:0003924">
    <property type="term" value="F:GTPase activity"/>
    <property type="evidence" value="ECO:0007669"/>
    <property type="project" value="UniProtKB-UniRule"/>
</dbReference>
<dbReference type="GO" id="GO:0003743">
    <property type="term" value="F:translation initiation factor activity"/>
    <property type="evidence" value="ECO:0007669"/>
    <property type="project" value="UniProtKB-UniRule"/>
</dbReference>
<dbReference type="CDD" id="cd03703">
    <property type="entry name" value="aeIF5B_II"/>
    <property type="match status" value="1"/>
</dbReference>
<dbReference type="CDD" id="cd16266">
    <property type="entry name" value="IF2_aeIF5B_IV"/>
    <property type="match status" value="1"/>
</dbReference>
<dbReference type="CDD" id="cd01887">
    <property type="entry name" value="IF2_eIF5B"/>
    <property type="match status" value="1"/>
</dbReference>
<dbReference type="FunFam" id="3.40.50.300:FF:000112">
    <property type="entry name" value="Eukaryotic translation initiation factor 5B"/>
    <property type="match status" value="1"/>
</dbReference>
<dbReference type="FunFam" id="2.40.30.10:FF:000013">
    <property type="entry name" value="eukaryotic translation initiation factor 5B"/>
    <property type="match status" value="1"/>
</dbReference>
<dbReference type="FunFam" id="2.40.30.10:FF:000152">
    <property type="entry name" value="Probable translation initiation factor IF-2"/>
    <property type="match status" value="1"/>
</dbReference>
<dbReference type="Gene3D" id="3.40.50.300">
    <property type="entry name" value="P-loop containing nucleotide triphosphate hydrolases"/>
    <property type="match status" value="1"/>
</dbReference>
<dbReference type="Gene3D" id="2.40.30.10">
    <property type="entry name" value="Translation factors"/>
    <property type="match status" value="2"/>
</dbReference>
<dbReference type="Gene3D" id="3.40.50.10050">
    <property type="entry name" value="Translation initiation factor IF- 2, domain 3"/>
    <property type="match status" value="1"/>
</dbReference>
<dbReference type="HAMAP" id="MF_00100_A">
    <property type="entry name" value="IF_2_A"/>
    <property type="match status" value="1"/>
</dbReference>
<dbReference type="InterPro" id="IPR004161">
    <property type="entry name" value="EFTu-like_2"/>
</dbReference>
<dbReference type="InterPro" id="IPR029459">
    <property type="entry name" value="EFTU-type"/>
</dbReference>
<dbReference type="InterPro" id="IPR027417">
    <property type="entry name" value="P-loop_NTPase"/>
</dbReference>
<dbReference type="InterPro" id="IPR005225">
    <property type="entry name" value="Small_GTP-bd"/>
</dbReference>
<dbReference type="InterPro" id="IPR000795">
    <property type="entry name" value="T_Tr_GTP-bd_dom"/>
</dbReference>
<dbReference type="InterPro" id="IPR004544">
    <property type="entry name" value="TF_aIF-2_arc"/>
</dbReference>
<dbReference type="InterPro" id="IPR015760">
    <property type="entry name" value="TIF_IF2"/>
</dbReference>
<dbReference type="InterPro" id="IPR023115">
    <property type="entry name" value="TIF_IF2_dom3"/>
</dbReference>
<dbReference type="InterPro" id="IPR036925">
    <property type="entry name" value="TIF_IF2_dom3_sf"/>
</dbReference>
<dbReference type="InterPro" id="IPR009000">
    <property type="entry name" value="Transl_B-barrel_sf"/>
</dbReference>
<dbReference type="NCBIfam" id="TIGR00491">
    <property type="entry name" value="aIF-2"/>
    <property type="match status" value="1"/>
</dbReference>
<dbReference type="NCBIfam" id="NF003078">
    <property type="entry name" value="PRK04004.1"/>
    <property type="match status" value="1"/>
</dbReference>
<dbReference type="NCBIfam" id="TIGR00231">
    <property type="entry name" value="small_GTP"/>
    <property type="match status" value="1"/>
</dbReference>
<dbReference type="PANTHER" id="PTHR43381:SF4">
    <property type="entry name" value="EUKARYOTIC TRANSLATION INITIATION FACTOR 5B"/>
    <property type="match status" value="1"/>
</dbReference>
<dbReference type="PANTHER" id="PTHR43381">
    <property type="entry name" value="TRANSLATION INITIATION FACTOR IF-2-RELATED"/>
    <property type="match status" value="1"/>
</dbReference>
<dbReference type="Pfam" id="PF00009">
    <property type="entry name" value="GTP_EFTU"/>
    <property type="match status" value="1"/>
</dbReference>
<dbReference type="Pfam" id="PF03144">
    <property type="entry name" value="GTP_EFTU_D2"/>
    <property type="match status" value="1"/>
</dbReference>
<dbReference type="Pfam" id="PF14578">
    <property type="entry name" value="GTP_EFTU_D4"/>
    <property type="match status" value="1"/>
</dbReference>
<dbReference type="Pfam" id="PF11987">
    <property type="entry name" value="IF-2"/>
    <property type="match status" value="1"/>
</dbReference>
<dbReference type="PRINTS" id="PR00315">
    <property type="entry name" value="ELONGATNFCT"/>
</dbReference>
<dbReference type="SUPFAM" id="SSF52156">
    <property type="entry name" value="Initiation factor IF2/eIF5b, domain 3"/>
    <property type="match status" value="1"/>
</dbReference>
<dbReference type="SUPFAM" id="SSF52540">
    <property type="entry name" value="P-loop containing nucleoside triphosphate hydrolases"/>
    <property type="match status" value="1"/>
</dbReference>
<dbReference type="SUPFAM" id="SSF50447">
    <property type="entry name" value="Translation proteins"/>
    <property type="match status" value="1"/>
</dbReference>
<dbReference type="PROSITE" id="PS51722">
    <property type="entry name" value="G_TR_2"/>
    <property type="match status" value="1"/>
</dbReference>
<feature type="chain" id="PRO_0000137309" description="Probable translation initiation factor IF-2">
    <location>
        <begin position="1"/>
        <end position="602"/>
    </location>
</feature>
<feature type="domain" description="tr-type G">
    <location>
        <begin position="10"/>
        <end position="227"/>
    </location>
</feature>
<feature type="region of interest" description="G1" evidence="1">
    <location>
        <begin position="19"/>
        <end position="26"/>
    </location>
</feature>
<feature type="region of interest" description="G2" evidence="1">
    <location>
        <begin position="44"/>
        <end position="48"/>
    </location>
</feature>
<feature type="region of interest" description="G3" evidence="1">
    <location>
        <begin position="83"/>
        <end position="86"/>
    </location>
</feature>
<feature type="region of interest" description="G4" evidence="1">
    <location>
        <begin position="137"/>
        <end position="140"/>
    </location>
</feature>
<feature type="region of interest" description="G5" evidence="1">
    <location>
        <begin position="205"/>
        <end position="207"/>
    </location>
</feature>
<feature type="binding site" evidence="2">
    <location>
        <begin position="19"/>
        <end position="26"/>
    </location>
    <ligand>
        <name>GTP</name>
        <dbReference type="ChEBI" id="CHEBI:37565"/>
    </ligand>
</feature>
<feature type="binding site" evidence="2">
    <location>
        <begin position="83"/>
        <end position="87"/>
    </location>
    <ligand>
        <name>GTP</name>
        <dbReference type="ChEBI" id="CHEBI:37565"/>
    </ligand>
</feature>
<feature type="binding site" evidence="2">
    <location>
        <begin position="137"/>
        <end position="140"/>
    </location>
    <ligand>
        <name>GTP</name>
        <dbReference type="ChEBI" id="CHEBI:37565"/>
    </ligand>
</feature>
<reference key="1">
    <citation type="journal article" date="2001" name="DNA Res.">
        <title>Complete genome sequence of an aerobic thermoacidophilic Crenarchaeon, Sulfolobus tokodaii strain7.</title>
        <authorList>
            <person name="Kawarabayasi Y."/>
            <person name="Hino Y."/>
            <person name="Horikawa H."/>
            <person name="Jin-no K."/>
            <person name="Takahashi M."/>
            <person name="Sekine M."/>
            <person name="Baba S."/>
            <person name="Ankai A."/>
            <person name="Kosugi H."/>
            <person name="Hosoyama A."/>
            <person name="Fukui S."/>
            <person name="Nagai Y."/>
            <person name="Nishijima K."/>
            <person name="Otsuka R."/>
            <person name="Nakazawa H."/>
            <person name="Takamiya M."/>
            <person name="Kato Y."/>
            <person name="Yoshizawa T."/>
            <person name="Tanaka T."/>
            <person name="Kudoh Y."/>
            <person name="Yamazaki J."/>
            <person name="Kushida N."/>
            <person name="Oguchi A."/>
            <person name="Aoki K."/>
            <person name="Masuda S."/>
            <person name="Yanagii M."/>
            <person name="Nishimura M."/>
            <person name="Yamagishi A."/>
            <person name="Oshima T."/>
            <person name="Kikuchi H."/>
        </authorList>
    </citation>
    <scope>NUCLEOTIDE SEQUENCE [LARGE SCALE GENOMIC DNA]</scope>
    <source>
        <strain>DSM 16993 / JCM 10545 / NBRC 100140 / 7</strain>
    </source>
</reference>
<proteinExistence type="inferred from homology"/>
<keyword id="KW-0342">GTP-binding</keyword>
<keyword id="KW-0396">Initiation factor</keyword>
<keyword id="KW-0547">Nucleotide-binding</keyword>
<keyword id="KW-0648">Protein biosynthesis</keyword>
<keyword id="KW-1185">Reference proteome</keyword>
<protein>
    <recommendedName>
        <fullName evidence="2">Probable translation initiation factor IF-2</fullName>
    </recommendedName>
</protein>
<comment type="function">
    <text evidence="2">Function in general translation initiation by promoting the binding of the formylmethionine-tRNA to ribosomes. Seems to function along with eIF-2.</text>
</comment>
<comment type="similarity">
    <text evidence="2">Belongs to the TRAFAC class translation factor GTPase superfamily. Classic translation factor GTPase family. IF-2 subfamily.</text>
</comment>
<sequence>MSQQLQSRRLRQPIVVVLGHVDHGKTTLLDKIRGTAVVKKEPGEMTQEVGASFVPTSVIEKIAEPLKKTFPIKLEIPGLLFIDTPGHELFSNLRRRGGSVADIAILVVDVVEGFQKQTYESLEILRSRKVPFLVAANKIDRIPGWKPIDTYSFLESIKSQRKDVQTQLDNYVYRLVGQLAELGFNADRFDRIRDFTKTVAIVPVSAKTGEGIAELLALLAGLTQNYMKTKLRFAEGPAKGVILEVKELQGLGYTIDVIIYDGILKKNDTIIIGGLNGPIVTKVRSILVPKPLQDIKVVKTDLTQIDEVYAAAGVKIYAPELENALAGSPLFVAENEQQIEEYKKIIQEEIASVKYYNANIAGIVVKADSLGSLEAIVEGLKQKNIPIRLADIGPITKKDITEAELTLQEAKEYGIIAAFRVKPLQGIEVPNNIKLIYSEIIYQLIDDIEKYITEVRESEKRRTLDSLILPGKFRLIPGYVFRRSDPVIVGVEVLGGIIRPKFPVMKKDGKRVGEILQIQDNKKSVDRATKGMEVAVSIKGNIMVGRQIDEGEILYTDVPKEDLEILLTKYKDIITDDMKEVIKEIINIKRVNDPTYALGLKV</sequence>
<gene>
    <name evidence="2" type="primary">infB</name>
    <name type="ordered locus">STK_02790</name>
</gene>
<organism>
    <name type="scientific">Sulfurisphaera tokodaii (strain DSM 16993 / JCM 10545 / NBRC 100140 / 7)</name>
    <name type="common">Sulfolobus tokodaii</name>
    <dbReference type="NCBI Taxonomy" id="273063"/>
    <lineage>
        <taxon>Archaea</taxon>
        <taxon>Thermoproteota</taxon>
        <taxon>Thermoprotei</taxon>
        <taxon>Sulfolobales</taxon>
        <taxon>Sulfolobaceae</taxon>
        <taxon>Sulfurisphaera</taxon>
    </lineage>
</organism>
<evidence type="ECO:0000250" key="1"/>
<evidence type="ECO:0000255" key="2">
    <source>
        <dbReference type="HAMAP-Rule" id="MF_00100"/>
    </source>
</evidence>
<name>IF2P_SULTO</name>
<accession>Q976A1</accession>